<comment type="function">
    <text evidence="2">Negatively regulates the transcription of the opuC operon. In the absence of GbsR, is also a negative regulator of the opuB operon. Binds to an inverted repeat in the promoter region of the operons.</text>
</comment>
<comment type="activity regulation">
    <text evidence="2">Is not choline-responsive.</text>
</comment>
<comment type="similarity">
    <text evidence="3">Belongs to the GbsR family.</text>
</comment>
<organism>
    <name type="scientific">Bacillus subtilis (strain 168)</name>
    <dbReference type="NCBI Taxonomy" id="224308"/>
    <lineage>
        <taxon>Bacteria</taxon>
        <taxon>Bacillati</taxon>
        <taxon>Bacillota</taxon>
        <taxon>Bacilli</taxon>
        <taxon>Bacillales</taxon>
        <taxon>Bacillaceae</taxon>
        <taxon>Bacillus</taxon>
    </lineage>
</organism>
<feature type="chain" id="PRO_0000381938" description="HTH-type transcriptional repressor OpcR">
    <location>
        <begin position="1"/>
        <end position="185"/>
    </location>
</feature>
<feature type="DNA-binding region" description="H-T-H motif" evidence="1">
    <location>
        <begin position="49"/>
        <end position="73"/>
    </location>
</feature>
<accession>O34709</accession>
<accession>Q795K5</accession>
<name>OPCR_BACSU</name>
<gene>
    <name type="primary">opcR</name>
    <name type="synonym">yvbF</name>
    <name type="ordered locus">BSU33840</name>
</gene>
<reference key="1">
    <citation type="journal article" date="1999" name="Mol. Microbiol.">
        <title>Two evolutionarily closely related ABC transporters mediate the uptake of choline for synthesis of the osmoprotectant glycine betaine in Bacillus subtilis.</title>
        <authorList>
            <person name="Kappes R.M."/>
            <person name="Kempf B."/>
            <person name="Kneip S."/>
            <person name="Boch J."/>
            <person name="Gade J."/>
            <person name="Meier-Wagner J."/>
            <person name="Bremer E."/>
        </authorList>
    </citation>
    <scope>NUCLEOTIDE SEQUENCE [GENOMIC DNA]</scope>
    <source>
        <strain>168 / JH642</strain>
    </source>
</reference>
<reference key="2">
    <citation type="journal article" date="1997" name="Nature">
        <title>The complete genome sequence of the Gram-positive bacterium Bacillus subtilis.</title>
        <authorList>
            <person name="Kunst F."/>
            <person name="Ogasawara N."/>
            <person name="Moszer I."/>
            <person name="Albertini A.M."/>
            <person name="Alloni G."/>
            <person name="Azevedo V."/>
            <person name="Bertero M.G."/>
            <person name="Bessieres P."/>
            <person name="Bolotin A."/>
            <person name="Borchert S."/>
            <person name="Borriss R."/>
            <person name="Boursier L."/>
            <person name="Brans A."/>
            <person name="Braun M."/>
            <person name="Brignell S.C."/>
            <person name="Bron S."/>
            <person name="Brouillet S."/>
            <person name="Bruschi C.V."/>
            <person name="Caldwell B."/>
            <person name="Capuano V."/>
            <person name="Carter N.M."/>
            <person name="Choi S.-K."/>
            <person name="Codani J.-J."/>
            <person name="Connerton I.F."/>
            <person name="Cummings N.J."/>
            <person name="Daniel R.A."/>
            <person name="Denizot F."/>
            <person name="Devine K.M."/>
            <person name="Duesterhoeft A."/>
            <person name="Ehrlich S.D."/>
            <person name="Emmerson P.T."/>
            <person name="Entian K.-D."/>
            <person name="Errington J."/>
            <person name="Fabret C."/>
            <person name="Ferrari E."/>
            <person name="Foulger D."/>
            <person name="Fritz C."/>
            <person name="Fujita M."/>
            <person name="Fujita Y."/>
            <person name="Fuma S."/>
            <person name="Galizzi A."/>
            <person name="Galleron N."/>
            <person name="Ghim S.-Y."/>
            <person name="Glaser P."/>
            <person name="Goffeau A."/>
            <person name="Golightly E.J."/>
            <person name="Grandi G."/>
            <person name="Guiseppi G."/>
            <person name="Guy B.J."/>
            <person name="Haga K."/>
            <person name="Haiech J."/>
            <person name="Harwood C.R."/>
            <person name="Henaut A."/>
            <person name="Hilbert H."/>
            <person name="Holsappel S."/>
            <person name="Hosono S."/>
            <person name="Hullo M.-F."/>
            <person name="Itaya M."/>
            <person name="Jones L.-M."/>
            <person name="Joris B."/>
            <person name="Karamata D."/>
            <person name="Kasahara Y."/>
            <person name="Klaerr-Blanchard M."/>
            <person name="Klein C."/>
            <person name="Kobayashi Y."/>
            <person name="Koetter P."/>
            <person name="Koningstein G."/>
            <person name="Krogh S."/>
            <person name="Kumano M."/>
            <person name="Kurita K."/>
            <person name="Lapidus A."/>
            <person name="Lardinois S."/>
            <person name="Lauber J."/>
            <person name="Lazarevic V."/>
            <person name="Lee S.-M."/>
            <person name="Levine A."/>
            <person name="Liu H."/>
            <person name="Masuda S."/>
            <person name="Mauel C."/>
            <person name="Medigue C."/>
            <person name="Medina N."/>
            <person name="Mellado R.P."/>
            <person name="Mizuno M."/>
            <person name="Moestl D."/>
            <person name="Nakai S."/>
            <person name="Noback M."/>
            <person name="Noone D."/>
            <person name="O'Reilly M."/>
            <person name="Ogawa K."/>
            <person name="Ogiwara A."/>
            <person name="Oudega B."/>
            <person name="Park S.-H."/>
            <person name="Parro V."/>
            <person name="Pohl T.M."/>
            <person name="Portetelle D."/>
            <person name="Porwollik S."/>
            <person name="Prescott A.M."/>
            <person name="Presecan E."/>
            <person name="Pujic P."/>
            <person name="Purnelle B."/>
            <person name="Rapoport G."/>
            <person name="Rey M."/>
            <person name="Reynolds S."/>
            <person name="Rieger M."/>
            <person name="Rivolta C."/>
            <person name="Rocha E."/>
            <person name="Roche B."/>
            <person name="Rose M."/>
            <person name="Sadaie Y."/>
            <person name="Sato T."/>
            <person name="Scanlan E."/>
            <person name="Schleich S."/>
            <person name="Schroeter R."/>
            <person name="Scoffone F."/>
            <person name="Sekiguchi J."/>
            <person name="Sekowska A."/>
            <person name="Seror S.J."/>
            <person name="Serror P."/>
            <person name="Shin B.-S."/>
            <person name="Soldo B."/>
            <person name="Sorokin A."/>
            <person name="Tacconi E."/>
            <person name="Takagi T."/>
            <person name="Takahashi H."/>
            <person name="Takemaru K."/>
            <person name="Takeuchi M."/>
            <person name="Tamakoshi A."/>
            <person name="Tanaka T."/>
            <person name="Terpstra P."/>
            <person name="Tognoni A."/>
            <person name="Tosato V."/>
            <person name="Uchiyama S."/>
            <person name="Vandenbol M."/>
            <person name="Vannier F."/>
            <person name="Vassarotti A."/>
            <person name="Viari A."/>
            <person name="Wambutt R."/>
            <person name="Wedler E."/>
            <person name="Wedler H."/>
            <person name="Weitzenegger T."/>
            <person name="Winters P."/>
            <person name="Wipat A."/>
            <person name="Yamamoto H."/>
            <person name="Yamane K."/>
            <person name="Yasumoto K."/>
            <person name="Yata K."/>
            <person name="Yoshida K."/>
            <person name="Yoshikawa H.-F."/>
            <person name="Zumstein E."/>
            <person name="Yoshikawa H."/>
            <person name="Danchin A."/>
        </authorList>
    </citation>
    <scope>NUCLEOTIDE SEQUENCE [LARGE SCALE GENOMIC DNA]</scope>
    <source>
        <strain>168</strain>
    </source>
</reference>
<reference key="3">
    <citation type="journal article" date="2013" name="Microbiology">
        <title>Involvement of OpcR, a GbsR-type transcriptional regulator, in negative regulation of two evolutionarily closely related choline uptake genes in Bacillus subtilis.</title>
        <authorList>
            <person name="Lee C.H."/>
            <person name="Wu T.Y."/>
            <person name="Shaw G.C."/>
        </authorList>
    </citation>
    <scope>FUNCTION</scope>
    <scope>DNA-BINDING</scope>
    <scope>ACTIVITY REGULATION</scope>
    <scope>GENE NAME</scope>
    <source>
        <strain>168</strain>
    </source>
</reference>
<dbReference type="EMBL" id="AF009352">
    <property type="protein sequence ID" value="AAB63772.1"/>
    <property type="molecule type" value="Genomic_DNA"/>
</dbReference>
<dbReference type="EMBL" id="AL009126">
    <property type="protein sequence ID" value="CAB15389.1"/>
    <property type="molecule type" value="Genomic_DNA"/>
</dbReference>
<dbReference type="PIR" id="E70029">
    <property type="entry name" value="E70029"/>
</dbReference>
<dbReference type="RefSeq" id="NP_391264.1">
    <property type="nucleotide sequence ID" value="NC_000964.3"/>
</dbReference>
<dbReference type="RefSeq" id="WP_003244093.1">
    <property type="nucleotide sequence ID" value="NZ_OZ025638.1"/>
</dbReference>
<dbReference type="SMR" id="O34709"/>
<dbReference type="FunCoup" id="O34709">
    <property type="interactions" value="25"/>
</dbReference>
<dbReference type="STRING" id="224308.BSU33840"/>
<dbReference type="PaxDb" id="224308-BSU33840"/>
<dbReference type="EnsemblBacteria" id="CAB15389">
    <property type="protein sequence ID" value="CAB15389"/>
    <property type="gene ID" value="BSU_33840"/>
</dbReference>
<dbReference type="GeneID" id="936258"/>
<dbReference type="KEGG" id="bsu:BSU33840"/>
<dbReference type="PATRIC" id="fig|224308.179.peg.3669"/>
<dbReference type="eggNOG" id="COG1510">
    <property type="taxonomic scope" value="Bacteria"/>
</dbReference>
<dbReference type="InParanoid" id="O34709"/>
<dbReference type="OrthoDB" id="9800374at2"/>
<dbReference type="PhylomeDB" id="O34709"/>
<dbReference type="BioCyc" id="BSUB:BSU33840-MONOMER"/>
<dbReference type="Proteomes" id="UP000001570">
    <property type="component" value="Chromosome"/>
</dbReference>
<dbReference type="GO" id="GO:0003677">
    <property type="term" value="F:DNA binding"/>
    <property type="evidence" value="ECO:0007669"/>
    <property type="project" value="UniProtKB-KW"/>
</dbReference>
<dbReference type="GO" id="GO:0003700">
    <property type="term" value="F:DNA-binding transcription factor activity"/>
    <property type="evidence" value="ECO:0007669"/>
    <property type="project" value="InterPro"/>
</dbReference>
<dbReference type="Gene3D" id="1.10.10.10">
    <property type="entry name" value="Winged helix-like DNA-binding domain superfamily/Winged helix DNA-binding domain"/>
    <property type="match status" value="1"/>
</dbReference>
<dbReference type="InterPro" id="IPR052362">
    <property type="entry name" value="HTH-GbsR_regulator"/>
</dbReference>
<dbReference type="InterPro" id="IPR000835">
    <property type="entry name" value="HTH_MarR-typ"/>
</dbReference>
<dbReference type="InterPro" id="IPR026282">
    <property type="entry name" value="MJ1563"/>
</dbReference>
<dbReference type="InterPro" id="IPR036388">
    <property type="entry name" value="WH-like_DNA-bd_sf"/>
</dbReference>
<dbReference type="InterPro" id="IPR036390">
    <property type="entry name" value="WH_DNA-bd_sf"/>
</dbReference>
<dbReference type="PANTHER" id="PTHR38465">
    <property type="entry name" value="HTH-TYPE TRANSCRIPTIONAL REGULATOR MJ1563-RELATED"/>
    <property type="match status" value="1"/>
</dbReference>
<dbReference type="PANTHER" id="PTHR38465:SF1">
    <property type="entry name" value="HTH-TYPE TRANSCRIPTIONAL REGULATOR MJ1563-RELATED"/>
    <property type="match status" value="1"/>
</dbReference>
<dbReference type="Pfam" id="PF12802">
    <property type="entry name" value="MarR_2"/>
    <property type="match status" value="1"/>
</dbReference>
<dbReference type="PIRSF" id="PIRSF006707">
    <property type="entry name" value="MJ1563"/>
    <property type="match status" value="1"/>
</dbReference>
<dbReference type="SUPFAM" id="SSF46785">
    <property type="entry name" value="Winged helix' DNA-binding domain"/>
    <property type="match status" value="1"/>
</dbReference>
<evidence type="ECO:0000255" key="1"/>
<evidence type="ECO:0000269" key="2">
    <source>
    </source>
</evidence>
<evidence type="ECO:0000305" key="3"/>
<keyword id="KW-0238">DNA-binding</keyword>
<keyword id="KW-1185">Reference proteome</keyword>
<keyword id="KW-0678">Repressor</keyword>
<keyword id="KW-0804">Transcription</keyword>
<keyword id="KW-0805">Transcription regulation</keyword>
<protein>
    <recommendedName>
        <fullName>HTH-type transcriptional repressor OpcR</fullName>
    </recommendedName>
</protein>
<proteinExistence type="evidence at protein level"/>
<sequence length="185" mass="21751">MKKTALDIIEHAEEHLIEKIAENMHTFGMPSTVGRVLGIIYMNRKPMTLSELSEATGMSKTRMSQVVREMIDANIAEKVFEKGVRKDLYDVEQDYYQTFISLFAANWTKVVSKNKVLYKKLNRELSDLLQRDGLTPEAEEKVNQLLNELKEWLHYYDWLSRLIEFFESEEVFRYVPKTKECSSLK</sequence>